<evidence type="ECO:0000250" key="1">
    <source>
        <dbReference type="UniProtKB" id="A6VCX3"/>
    </source>
</evidence>
<evidence type="ECO:0000250" key="2">
    <source>
        <dbReference type="UniProtKB" id="P76112"/>
    </source>
</evidence>
<evidence type="ECO:0000255" key="3">
    <source>
        <dbReference type="PROSITE-ProRule" id="PRU00532"/>
    </source>
</evidence>
<evidence type="ECO:0000269" key="4">
    <source>
    </source>
</evidence>
<evidence type="ECO:0000269" key="5">
    <source ref="3"/>
</evidence>
<evidence type="ECO:0000303" key="6">
    <source>
    </source>
</evidence>
<evidence type="ECO:0007829" key="7">
    <source>
        <dbReference type="PDB" id="3DR6"/>
    </source>
</evidence>
<proteinExistence type="evidence at protein level"/>
<comment type="function">
    <text evidence="2 4">Plays a role in the resistance against the toxic effects of L-methionine sulfoximine (MSX), a rare amino acid which inhibits glutamine synthetase (GlnA). Catalyzes the acetylation of MSX. It can also use L-methionine sulfone (MSO) (PubMed:25368301). Also catalyzes the acylation of free L-amino acids using an acyl-CoA as acyl donor (By similarity).</text>
</comment>
<comment type="catalytic activity">
    <reaction evidence="4">
        <text>L-methionine sulfoximine + acetyl-CoA = N-acetyl-L-methionine sulfoximine + CoA + H(+)</text>
        <dbReference type="Rhea" id="RHEA:47660"/>
        <dbReference type="ChEBI" id="CHEBI:15378"/>
        <dbReference type="ChEBI" id="CHEBI:57287"/>
        <dbReference type="ChEBI" id="CHEBI:57288"/>
        <dbReference type="ChEBI" id="CHEBI:87826"/>
        <dbReference type="ChEBI" id="CHEBI:87827"/>
    </reaction>
</comment>
<comment type="catalytic activity">
    <reaction evidence="4">
        <text>L-methionine sulfone + acetyl-CoA = N-acetyl-L-methionine sulfone + CoA + H(+)</text>
        <dbReference type="Rhea" id="RHEA:47656"/>
        <dbReference type="ChEBI" id="CHEBI:15378"/>
        <dbReference type="ChEBI" id="CHEBI:57287"/>
        <dbReference type="ChEBI" id="CHEBI:57288"/>
        <dbReference type="ChEBI" id="CHEBI:87824"/>
        <dbReference type="ChEBI" id="CHEBI:87825"/>
    </reaction>
</comment>
<comment type="biophysicochemical properties">
    <kinetics>
        <KM evidence="4">156 uM for acetyl-CoA (at pH 7.2 and 30 degrees Celsius)</KM>
        <KM evidence="4">230 uM for MSO (at pH 7.2 and 30 degrees Celsius)</KM>
        <KM evidence="4">576 uM for MSX (at pH 7.2 and 30 degrees Celsius)</KM>
        <text evidence="4">kcat is 35 sec(-1) for acetyltransferase activity with MSX as substrate (at pH 7.2 and 30 degrees Celsius). kcat is 31 sec(-1) for acetyltransferase activity with MSO as substrate (at pH 7.2 and 30 degrees Celsius). kcat is 23 sec(-1) for acetyltransferase activity with acetyl-CoA as substrate (at pH 7.2 and 30 degrees Celsius).</text>
    </kinetics>
</comment>
<comment type="subunit">
    <text evidence="4 5">Homodimer.</text>
</comment>
<comment type="disruption phenotype">
    <text evidence="4">In minimal medium, cells lacking this gene grow normally with MSO, but growth is inhibited by MSX. In rich medium, growth of cells lacking this gene are partially inhibited by MSX, only when its concentration is at least 50 uM.</text>
</comment>
<accession>Q8ZPD3</accession>
<protein>
    <recommendedName>
        <fullName evidence="6">L-methionine sulfoximine/L-methionine sulfone acetyltransferase</fullName>
        <ecNumber evidence="4">2.3.1.-</ecNumber>
    </recommendedName>
    <alternativeName>
        <fullName evidence="2">L-amino acid N-acyltransferase</fullName>
        <ecNumber evidence="2">2.3.1.-</ecNumber>
    </alternativeName>
    <alternativeName>
        <fullName evidence="6">Methionine derivative detoxifier A</fullName>
        <shortName evidence="6">MDDA</shortName>
    </alternativeName>
</protein>
<organism>
    <name type="scientific">Salmonella typhimurium (strain LT2 / SGSC1412 / ATCC 700720)</name>
    <dbReference type="NCBI Taxonomy" id="99287"/>
    <lineage>
        <taxon>Bacteria</taxon>
        <taxon>Pseudomonadati</taxon>
        <taxon>Pseudomonadota</taxon>
        <taxon>Gammaproteobacteria</taxon>
        <taxon>Enterobacterales</taxon>
        <taxon>Enterobacteriaceae</taxon>
        <taxon>Salmonella</taxon>
    </lineage>
</organism>
<reference key="1">
    <citation type="journal article" date="2001" name="Nature">
        <title>Complete genome sequence of Salmonella enterica serovar Typhimurium LT2.</title>
        <authorList>
            <person name="McClelland M."/>
            <person name="Sanderson K.E."/>
            <person name="Spieth J."/>
            <person name="Clifton S.W."/>
            <person name="Latreille P."/>
            <person name="Courtney L."/>
            <person name="Porwollik S."/>
            <person name="Ali J."/>
            <person name="Dante M."/>
            <person name="Du F."/>
            <person name="Hou S."/>
            <person name="Layman D."/>
            <person name="Leonard S."/>
            <person name="Nguyen C."/>
            <person name="Scott K."/>
            <person name="Holmes A."/>
            <person name="Grewal N."/>
            <person name="Mulvaney E."/>
            <person name="Ryan E."/>
            <person name="Sun H."/>
            <person name="Florea L."/>
            <person name="Miller W."/>
            <person name="Stoneking T."/>
            <person name="Nhan M."/>
            <person name="Waterston R."/>
            <person name="Wilson R.K."/>
        </authorList>
    </citation>
    <scope>NUCLEOTIDE SEQUENCE [LARGE SCALE GENOMIC DNA]</scope>
    <source>
        <strain>LT2 / SGSC1412 / ATCC 700720</strain>
    </source>
</reference>
<reference key="2">
    <citation type="journal article" date="2015" name="J. Bacteriol.">
        <title>In Salmonella enterica, the Gcn5-related acetyltransferase MddA (formerly YncA) acetylates methionine sulfoximine and methionine sulfone, blocking their toxic effects.</title>
        <authorList>
            <person name="Hentchel K.L."/>
            <person name="Escalante-Semerena J.C."/>
        </authorList>
    </citation>
    <scope>FUNCTION</scope>
    <scope>CATALYTIC ACTIVITY</scope>
    <scope>BIOPHYSICOCHEMICAL PROPERTIES</scope>
    <scope>DISRUPTION PHENOTYPE</scope>
    <scope>MUTAGENESIS OF GLU-82</scope>
    <scope>SUBSTRATE SPECIFICITY</scope>
    <scope>SUBUNIT</scope>
    <source>
        <strain>LT2 / SGSC1412 / ATCC 700720</strain>
    </source>
</reference>
<reference key="3">
    <citation type="submission" date="2008-07" db="PDB data bank">
        <title>Structure of yncA, a putative acetyltransferase from Salmonella typhimurium with its cofactor acetyl-CoA.</title>
        <authorList>
            <consortium name="Center for structural genomics of infectious diseases (CSGID)"/>
        </authorList>
    </citation>
    <scope>X-RAY CRYSTALLOGRAPHY (1.75 ANGSTROMS) IN COMPLEX WITH ACETYL-COA</scope>
    <scope>SUBUNIT</scope>
    <source>
        <strain>LT2 / SGSC1412 / ATCC 700720</strain>
    </source>
</reference>
<gene>
    <name type="primary">yncA</name>
    <name type="ordered locus">STM1590</name>
</gene>
<dbReference type="EC" id="2.3.1.-" evidence="4 2"/>
<dbReference type="EMBL" id="AE006468">
    <property type="protein sequence ID" value="AAL20508.1"/>
    <property type="molecule type" value="Genomic_DNA"/>
</dbReference>
<dbReference type="RefSeq" id="NP_460549.1">
    <property type="nucleotide sequence ID" value="NC_003197.2"/>
</dbReference>
<dbReference type="PDB" id="3DR6">
    <property type="method" value="X-ray"/>
    <property type="resolution" value="1.75 A"/>
    <property type="chains" value="A/B/C=1-171"/>
</dbReference>
<dbReference type="PDB" id="3DR8">
    <property type="method" value="X-ray"/>
    <property type="resolution" value="1.95 A"/>
    <property type="chains" value="A/B=1-171"/>
</dbReference>
<dbReference type="PDBsum" id="3DR6"/>
<dbReference type="PDBsum" id="3DR8"/>
<dbReference type="SMR" id="Q8ZPD3"/>
<dbReference type="STRING" id="99287.STM1590"/>
<dbReference type="PaxDb" id="99287-STM1590"/>
<dbReference type="GeneID" id="1253108"/>
<dbReference type="KEGG" id="stm:STM1590"/>
<dbReference type="PATRIC" id="fig|99287.12.peg.1681"/>
<dbReference type="HOGENOM" id="CLU_013985_4_4_6"/>
<dbReference type="OMA" id="RTAYDWT"/>
<dbReference type="PhylomeDB" id="Q8ZPD3"/>
<dbReference type="BioCyc" id="SENT99287:STM1590-MONOMER"/>
<dbReference type="EvolutionaryTrace" id="Q8ZPD3"/>
<dbReference type="Proteomes" id="UP000001014">
    <property type="component" value="Chromosome"/>
</dbReference>
<dbReference type="GO" id="GO:0016747">
    <property type="term" value="F:acyltransferase activity, transferring groups other than amino-acyl groups"/>
    <property type="evidence" value="ECO:0000314"/>
    <property type="project" value="UniProtKB"/>
</dbReference>
<dbReference type="CDD" id="cd04301">
    <property type="entry name" value="NAT_SF"/>
    <property type="match status" value="1"/>
</dbReference>
<dbReference type="FunFam" id="3.40.630.30:FF:000026">
    <property type="entry name" value="Phosphinothricin acetyltransferase"/>
    <property type="match status" value="1"/>
</dbReference>
<dbReference type="Gene3D" id="3.40.630.30">
    <property type="match status" value="1"/>
</dbReference>
<dbReference type="InterPro" id="IPR016181">
    <property type="entry name" value="Acyl_CoA_acyltransferase"/>
</dbReference>
<dbReference type="InterPro" id="IPR000182">
    <property type="entry name" value="GNAT_dom"/>
</dbReference>
<dbReference type="PANTHER" id="PTHR43072">
    <property type="entry name" value="N-ACETYLTRANSFERASE"/>
    <property type="match status" value="1"/>
</dbReference>
<dbReference type="PANTHER" id="PTHR43072:SF23">
    <property type="entry name" value="UPF0039 PROTEIN C11D3.02C"/>
    <property type="match status" value="1"/>
</dbReference>
<dbReference type="Pfam" id="PF00583">
    <property type="entry name" value="Acetyltransf_1"/>
    <property type="match status" value="1"/>
</dbReference>
<dbReference type="SUPFAM" id="SSF55729">
    <property type="entry name" value="Acyl-CoA N-acyltransferases (Nat)"/>
    <property type="match status" value="1"/>
</dbReference>
<dbReference type="PROSITE" id="PS51186">
    <property type="entry name" value="GNAT"/>
    <property type="match status" value="1"/>
</dbReference>
<feature type="chain" id="PRO_0000433346" description="L-methionine sulfoximine/L-methionine sulfone acetyltransferase">
    <location>
        <begin position="1"/>
        <end position="171"/>
    </location>
</feature>
<feature type="domain" description="N-acetyltransferase" evidence="3">
    <location>
        <begin position="1"/>
        <end position="163"/>
    </location>
</feature>
<feature type="binding site" evidence="1">
    <location>
        <begin position="72"/>
        <end position="74"/>
    </location>
    <ligand>
        <name>substrate</name>
    </ligand>
</feature>
<feature type="binding site" evidence="1">
    <location>
        <begin position="82"/>
        <end position="84"/>
    </location>
    <ligand>
        <name>substrate</name>
    </ligand>
</feature>
<feature type="binding site" evidence="5">
    <location>
        <begin position="85"/>
        <end position="87"/>
    </location>
    <ligand>
        <name>acetyl-CoA</name>
        <dbReference type="ChEBI" id="CHEBI:57288"/>
    </ligand>
</feature>
<feature type="binding site" evidence="5">
    <location>
        <begin position="93"/>
        <end position="98"/>
    </location>
    <ligand>
        <name>acetyl-CoA</name>
        <dbReference type="ChEBI" id="CHEBI:57288"/>
    </ligand>
</feature>
<feature type="binding site" evidence="5">
    <location>
        <position position="124"/>
    </location>
    <ligand>
        <name>acetyl-CoA</name>
        <dbReference type="ChEBI" id="CHEBI:57288"/>
    </ligand>
</feature>
<feature type="binding site" evidence="5">
    <location>
        <position position="133"/>
    </location>
    <ligand>
        <name>acetyl-CoA</name>
        <dbReference type="ChEBI" id="CHEBI:57288"/>
    </ligand>
</feature>
<feature type="mutagenesis site" description="Loss of acetyltransferase activity." evidence="4">
    <original>E</original>
    <variation>Q</variation>
    <location>
        <position position="82"/>
    </location>
</feature>
<feature type="strand" evidence="7">
    <location>
        <begin position="2"/>
        <end position="5"/>
    </location>
</feature>
<feature type="helix" evidence="7">
    <location>
        <begin position="8"/>
        <end position="10"/>
    </location>
</feature>
<feature type="helix" evidence="7">
    <location>
        <begin position="11"/>
        <end position="23"/>
    </location>
</feature>
<feature type="turn" evidence="7">
    <location>
        <begin position="26"/>
        <end position="29"/>
    </location>
</feature>
<feature type="helix" evidence="7">
    <location>
        <begin position="36"/>
        <end position="49"/>
    </location>
</feature>
<feature type="strand" evidence="7">
    <location>
        <begin position="53"/>
        <end position="58"/>
    </location>
</feature>
<feature type="strand" evidence="7">
    <location>
        <begin position="61"/>
        <end position="74"/>
    </location>
</feature>
<feature type="helix" evidence="7">
    <location>
        <begin position="75"/>
        <end position="77"/>
    </location>
</feature>
<feature type="strand" evidence="7">
    <location>
        <begin position="80"/>
        <end position="87"/>
    </location>
</feature>
<feature type="helix" evidence="7">
    <location>
        <begin position="89"/>
        <end position="91"/>
    </location>
</feature>
<feature type="helix" evidence="7">
    <location>
        <begin position="96"/>
        <end position="110"/>
    </location>
</feature>
<feature type="strand" evidence="7">
    <location>
        <begin position="114"/>
        <end position="121"/>
    </location>
</feature>
<feature type="helix" evidence="7">
    <location>
        <begin position="125"/>
        <end position="133"/>
    </location>
</feature>
<feature type="strand" evidence="7">
    <location>
        <begin position="137"/>
        <end position="148"/>
    </location>
</feature>
<feature type="strand" evidence="7">
    <location>
        <begin position="151"/>
        <end position="161"/>
    </location>
</feature>
<sequence length="171" mass="19188">MTIRFADKADCAAITEIYNHAVLHTAAIWNDRTVDTDNRLAWYEARQLLGYPVLVSEENGVVTGYASFGDWRSFDGFRYTVEHSVYVHPAHQGKGLGRKLLSRLIDEARRCGKHVMVAGIESQNAASIRLHHSLGFTVTAQMPQVGVKFGRWLDLTFMQLQLDEHAAPDAC</sequence>
<name>MDDA_SALTY</name>
<keyword id="KW-0002">3D-structure</keyword>
<keyword id="KW-0012">Acyltransferase</keyword>
<keyword id="KW-1185">Reference proteome</keyword>
<keyword id="KW-0808">Transferase</keyword>